<proteinExistence type="inferred from homology"/>
<accession>A6U3J8</accession>
<organism>
    <name type="scientific">Staphylococcus aureus (strain JH1)</name>
    <dbReference type="NCBI Taxonomy" id="359787"/>
    <lineage>
        <taxon>Bacteria</taxon>
        <taxon>Bacillati</taxon>
        <taxon>Bacillota</taxon>
        <taxon>Bacilli</taxon>
        <taxon>Bacillales</taxon>
        <taxon>Staphylococcaceae</taxon>
        <taxon>Staphylococcus</taxon>
    </lineage>
</organism>
<feature type="chain" id="PRO_1000074912" description="Serine hydroxymethyltransferase">
    <location>
        <begin position="1"/>
        <end position="412"/>
    </location>
</feature>
<feature type="binding site" evidence="1">
    <location>
        <position position="117"/>
    </location>
    <ligand>
        <name>(6S)-5,6,7,8-tetrahydrofolate</name>
        <dbReference type="ChEBI" id="CHEBI:57453"/>
    </ligand>
</feature>
<feature type="binding site" evidence="1">
    <location>
        <begin position="121"/>
        <end position="123"/>
    </location>
    <ligand>
        <name>(6S)-5,6,7,8-tetrahydrofolate</name>
        <dbReference type="ChEBI" id="CHEBI:57453"/>
    </ligand>
</feature>
<feature type="site" description="Plays an important role in substrate specificity" evidence="1">
    <location>
        <position position="225"/>
    </location>
</feature>
<feature type="modified residue" description="N6-(pyridoxal phosphate)lysine" evidence="1">
    <location>
        <position position="226"/>
    </location>
</feature>
<reference key="1">
    <citation type="submission" date="2007-06" db="EMBL/GenBank/DDBJ databases">
        <title>Complete sequence of chromosome of Staphylococcus aureus subsp. aureus JH1.</title>
        <authorList>
            <consortium name="US DOE Joint Genome Institute"/>
            <person name="Copeland A."/>
            <person name="Lucas S."/>
            <person name="Lapidus A."/>
            <person name="Barry K."/>
            <person name="Detter J.C."/>
            <person name="Glavina del Rio T."/>
            <person name="Hammon N."/>
            <person name="Israni S."/>
            <person name="Dalin E."/>
            <person name="Tice H."/>
            <person name="Pitluck S."/>
            <person name="Chain P."/>
            <person name="Malfatti S."/>
            <person name="Shin M."/>
            <person name="Vergez L."/>
            <person name="Schmutz J."/>
            <person name="Larimer F."/>
            <person name="Land M."/>
            <person name="Hauser L."/>
            <person name="Kyrpides N."/>
            <person name="Ivanova N."/>
            <person name="Tomasz A."/>
            <person name="Richardson P."/>
        </authorList>
    </citation>
    <scope>NUCLEOTIDE SEQUENCE [LARGE SCALE GENOMIC DNA]</scope>
    <source>
        <strain>JH1</strain>
    </source>
</reference>
<keyword id="KW-0028">Amino-acid biosynthesis</keyword>
<keyword id="KW-0963">Cytoplasm</keyword>
<keyword id="KW-0554">One-carbon metabolism</keyword>
<keyword id="KW-0663">Pyridoxal phosphate</keyword>
<keyword id="KW-0808">Transferase</keyword>
<protein>
    <recommendedName>
        <fullName evidence="1">Serine hydroxymethyltransferase</fullName>
        <shortName evidence="1">SHMT</shortName>
        <shortName evidence="1">Serine methylase</shortName>
        <ecNumber evidence="1">2.1.2.1</ecNumber>
    </recommendedName>
</protein>
<evidence type="ECO:0000255" key="1">
    <source>
        <dbReference type="HAMAP-Rule" id="MF_00051"/>
    </source>
</evidence>
<name>GLYA_STAA2</name>
<sequence length="412" mass="45172">MSYITKQDKVIAEAIEREFQRQNSNIELIASENFVSEAVMEAQGSVLTNKYAEGYPGRRYYGGCEFVDVTESIAIDRAKALFGAEHVNVQPHSGSQANMAVYLVALEMGDTVLGMNLSHGGHLTHGAPVNFSGKFYNFVEYGVDKDTERINYDEVRKLALEHKPKLIVAGASAYSRTIDFKKFKEIADEVNAKLMVDMAHIAGLVAAGLHPNPVEYADFVTTTTHKTLRGPRGGMILCKEEYKKDIDKTIFPGIQGGPLEHVIAAKAVAFGEALENNFKTYQQQVVKNAKVLAEALINEGFRIVSGGTDNHLVAVDVKGSIGLTGKEAEETLDSVGITCNKNTIPFDQEKPFVTSGIRLGTPAATTRGFDEKAFEEVAKIISLALKNSKDEEKLQQAKERVAKLTAEYPLYQ</sequence>
<dbReference type="EC" id="2.1.2.1" evidence="1"/>
<dbReference type="EMBL" id="CP000736">
    <property type="protein sequence ID" value="ABR53016.1"/>
    <property type="molecule type" value="Genomic_DNA"/>
</dbReference>
<dbReference type="SMR" id="A6U3J8"/>
<dbReference type="KEGG" id="sah:SaurJH1_2187"/>
<dbReference type="HOGENOM" id="CLU_022477_2_1_9"/>
<dbReference type="UniPathway" id="UPA00193"/>
<dbReference type="UniPathway" id="UPA00288">
    <property type="reaction ID" value="UER01023"/>
</dbReference>
<dbReference type="GO" id="GO:0005829">
    <property type="term" value="C:cytosol"/>
    <property type="evidence" value="ECO:0007669"/>
    <property type="project" value="TreeGrafter"/>
</dbReference>
<dbReference type="GO" id="GO:0004372">
    <property type="term" value="F:glycine hydroxymethyltransferase activity"/>
    <property type="evidence" value="ECO:0007669"/>
    <property type="project" value="UniProtKB-UniRule"/>
</dbReference>
<dbReference type="GO" id="GO:0030170">
    <property type="term" value="F:pyridoxal phosphate binding"/>
    <property type="evidence" value="ECO:0007669"/>
    <property type="project" value="UniProtKB-UniRule"/>
</dbReference>
<dbReference type="GO" id="GO:0019264">
    <property type="term" value="P:glycine biosynthetic process from serine"/>
    <property type="evidence" value="ECO:0007669"/>
    <property type="project" value="UniProtKB-UniRule"/>
</dbReference>
<dbReference type="GO" id="GO:0035999">
    <property type="term" value="P:tetrahydrofolate interconversion"/>
    <property type="evidence" value="ECO:0007669"/>
    <property type="project" value="UniProtKB-UniRule"/>
</dbReference>
<dbReference type="CDD" id="cd00378">
    <property type="entry name" value="SHMT"/>
    <property type="match status" value="1"/>
</dbReference>
<dbReference type="FunFam" id="3.40.640.10:FF:000001">
    <property type="entry name" value="Serine hydroxymethyltransferase"/>
    <property type="match status" value="1"/>
</dbReference>
<dbReference type="FunFam" id="3.90.1150.10:FF:000003">
    <property type="entry name" value="Serine hydroxymethyltransferase"/>
    <property type="match status" value="1"/>
</dbReference>
<dbReference type="Gene3D" id="3.90.1150.10">
    <property type="entry name" value="Aspartate Aminotransferase, domain 1"/>
    <property type="match status" value="1"/>
</dbReference>
<dbReference type="Gene3D" id="3.40.640.10">
    <property type="entry name" value="Type I PLP-dependent aspartate aminotransferase-like (Major domain)"/>
    <property type="match status" value="1"/>
</dbReference>
<dbReference type="HAMAP" id="MF_00051">
    <property type="entry name" value="SHMT"/>
    <property type="match status" value="1"/>
</dbReference>
<dbReference type="InterPro" id="IPR015424">
    <property type="entry name" value="PyrdxlP-dep_Trfase"/>
</dbReference>
<dbReference type="InterPro" id="IPR015421">
    <property type="entry name" value="PyrdxlP-dep_Trfase_major"/>
</dbReference>
<dbReference type="InterPro" id="IPR015422">
    <property type="entry name" value="PyrdxlP-dep_Trfase_small"/>
</dbReference>
<dbReference type="InterPro" id="IPR001085">
    <property type="entry name" value="Ser_HO-MeTrfase"/>
</dbReference>
<dbReference type="InterPro" id="IPR049943">
    <property type="entry name" value="Ser_HO-MeTrfase-like"/>
</dbReference>
<dbReference type="InterPro" id="IPR019798">
    <property type="entry name" value="Ser_HO-MeTrfase_PLP_BS"/>
</dbReference>
<dbReference type="InterPro" id="IPR039429">
    <property type="entry name" value="SHMT-like_dom"/>
</dbReference>
<dbReference type="NCBIfam" id="NF000586">
    <property type="entry name" value="PRK00011.1"/>
    <property type="match status" value="1"/>
</dbReference>
<dbReference type="PANTHER" id="PTHR11680">
    <property type="entry name" value="SERINE HYDROXYMETHYLTRANSFERASE"/>
    <property type="match status" value="1"/>
</dbReference>
<dbReference type="PANTHER" id="PTHR11680:SF35">
    <property type="entry name" value="SERINE HYDROXYMETHYLTRANSFERASE 1"/>
    <property type="match status" value="1"/>
</dbReference>
<dbReference type="Pfam" id="PF00464">
    <property type="entry name" value="SHMT"/>
    <property type="match status" value="1"/>
</dbReference>
<dbReference type="PIRSF" id="PIRSF000412">
    <property type="entry name" value="SHMT"/>
    <property type="match status" value="1"/>
</dbReference>
<dbReference type="SUPFAM" id="SSF53383">
    <property type="entry name" value="PLP-dependent transferases"/>
    <property type="match status" value="1"/>
</dbReference>
<dbReference type="PROSITE" id="PS00096">
    <property type="entry name" value="SHMT"/>
    <property type="match status" value="1"/>
</dbReference>
<comment type="function">
    <text evidence="1">Catalyzes the reversible interconversion of serine and glycine with tetrahydrofolate (THF) serving as the one-carbon carrier. This reaction serves as the major source of one-carbon groups required for the biosynthesis of purines, thymidylate, methionine, and other important biomolecules. Also exhibits THF-independent aldolase activity toward beta-hydroxyamino acids, producing glycine and aldehydes, via a retro-aldol mechanism.</text>
</comment>
<comment type="catalytic activity">
    <reaction evidence="1">
        <text>(6R)-5,10-methylene-5,6,7,8-tetrahydrofolate + glycine + H2O = (6S)-5,6,7,8-tetrahydrofolate + L-serine</text>
        <dbReference type="Rhea" id="RHEA:15481"/>
        <dbReference type="ChEBI" id="CHEBI:15377"/>
        <dbReference type="ChEBI" id="CHEBI:15636"/>
        <dbReference type="ChEBI" id="CHEBI:33384"/>
        <dbReference type="ChEBI" id="CHEBI:57305"/>
        <dbReference type="ChEBI" id="CHEBI:57453"/>
        <dbReference type="EC" id="2.1.2.1"/>
    </reaction>
</comment>
<comment type="cofactor">
    <cofactor evidence="1">
        <name>pyridoxal 5'-phosphate</name>
        <dbReference type="ChEBI" id="CHEBI:597326"/>
    </cofactor>
</comment>
<comment type="pathway">
    <text evidence="1">One-carbon metabolism; tetrahydrofolate interconversion.</text>
</comment>
<comment type="pathway">
    <text evidence="1">Amino-acid biosynthesis; glycine biosynthesis; glycine from L-serine: step 1/1.</text>
</comment>
<comment type="subunit">
    <text evidence="1">Homodimer.</text>
</comment>
<comment type="subcellular location">
    <subcellularLocation>
        <location evidence="1">Cytoplasm</location>
    </subcellularLocation>
</comment>
<comment type="similarity">
    <text evidence="1">Belongs to the SHMT family.</text>
</comment>
<gene>
    <name evidence="1" type="primary">glyA</name>
    <name type="ordered locus">SaurJH1_2187</name>
</gene>